<name>EIF3I_CAEEL</name>
<feature type="chain" id="PRO_0000365337" description="Eukaryotic translation initiation factor 3 subunit I">
    <location>
        <begin position="1"/>
        <end position="327"/>
    </location>
</feature>
<feature type="repeat" description="WD 1">
    <location>
        <begin position="8"/>
        <end position="49"/>
    </location>
</feature>
<feature type="repeat" description="WD 2">
    <location>
        <begin position="51"/>
        <end position="89"/>
    </location>
</feature>
<feature type="repeat" description="WD 3">
    <location>
        <begin position="188"/>
        <end position="227"/>
    </location>
</feature>
<feature type="repeat" description="WD 4">
    <location>
        <begin position="229"/>
        <end position="268"/>
    </location>
</feature>
<feature type="repeat" description="WD 5">
    <location>
        <begin position="285"/>
        <end position="324"/>
    </location>
</feature>
<feature type="mutagenesis site" description="Represses the convulsive behavior due to cholinergic hyperexcitation caused by an acr-2 mutant." evidence="2">
    <original>E</original>
    <variation>R</variation>
    <location>
        <position position="252"/>
    </location>
</feature>
<keyword id="KW-0963">Cytoplasm</keyword>
<keyword id="KW-0396">Initiation factor</keyword>
<keyword id="KW-0648">Protein biosynthesis</keyword>
<keyword id="KW-1185">Reference proteome</keyword>
<keyword id="KW-0677">Repeat</keyword>
<keyword id="KW-0853">WD repeat</keyword>
<reference key="1">
    <citation type="journal article" date="1998" name="Science">
        <title>Genome sequence of the nematode C. elegans: a platform for investigating biology.</title>
        <authorList>
            <consortium name="The C. elegans sequencing consortium"/>
        </authorList>
    </citation>
    <scope>NUCLEOTIDE SEQUENCE [LARGE SCALE GENOMIC DNA]</scope>
    <source>
        <strain>Bristol N2</strain>
    </source>
</reference>
<reference key="2">
    <citation type="journal article" date="2021" name="Elife">
        <title>Eukaryotic initiation factor EIF-3.G augments mRNA translation efficiency to regulate neuronal activity.</title>
        <authorList>
            <person name="Blazie S.M."/>
            <person name="Takayanagi-Kiya S."/>
            <person name="McCulloch K.A."/>
            <person name="Jin Y."/>
        </authorList>
    </citation>
    <scope>MUTAGENESIS OF GLU-252</scope>
</reference>
<dbReference type="EMBL" id="FO081786">
    <property type="protein sequence ID" value="CCD73538.1"/>
    <property type="molecule type" value="Genomic_DNA"/>
</dbReference>
<dbReference type="RefSeq" id="NP_490988.2">
    <property type="nucleotide sequence ID" value="NM_058587.4"/>
</dbReference>
<dbReference type="SMR" id="Q965S8"/>
<dbReference type="BioGRID" id="37294">
    <property type="interactions" value="18"/>
</dbReference>
<dbReference type="FunCoup" id="Q965S8">
    <property type="interactions" value="2682"/>
</dbReference>
<dbReference type="IntAct" id="Q965S8">
    <property type="interactions" value="1"/>
</dbReference>
<dbReference type="STRING" id="6239.Y74C10AR.1a.1"/>
<dbReference type="PaxDb" id="6239-Y74C10AR.1"/>
<dbReference type="PeptideAtlas" id="Q965S8"/>
<dbReference type="EnsemblMetazoa" id="Y74C10AR.1a.1">
    <property type="protein sequence ID" value="Y74C10AR.1a.1"/>
    <property type="gene ID" value="WBGene00001232"/>
</dbReference>
<dbReference type="GeneID" id="171809"/>
<dbReference type="KEGG" id="cel:CELE_Y74C10AR.1"/>
<dbReference type="UCSC" id="Y74C10AR.1">
    <property type="organism name" value="c. elegans"/>
</dbReference>
<dbReference type="AGR" id="WB:WBGene00001232"/>
<dbReference type="CTD" id="171809"/>
<dbReference type="WormBase" id="Y74C10AR.1a">
    <property type="protein sequence ID" value="CE30325"/>
    <property type="gene ID" value="WBGene00001232"/>
    <property type="gene designation" value="eif-3.I"/>
</dbReference>
<dbReference type="eggNOG" id="KOG0643">
    <property type="taxonomic scope" value="Eukaryota"/>
</dbReference>
<dbReference type="GeneTree" id="ENSGT00940000167369"/>
<dbReference type="HOGENOM" id="CLU_043845_0_1_1"/>
<dbReference type="InParanoid" id="Q965S8"/>
<dbReference type="OMA" id="VWFSHNG"/>
<dbReference type="OrthoDB" id="24966at2759"/>
<dbReference type="PhylomeDB" id="Q965S8"/>
<dbReference type="Reactome" id="R-CEL-156827">
    <property type="pathway name" value="L13a-mediated translational silencing of Ceruloplasmin expression"/>
</dbReference>
<dbReference type="Reactome" id="R-CEL-72649">
    <property type="pathway name" value="Translation initiation complex formation"/>
</dbReference>
<dbReference type="Reactome" id="R-CEL-72689">
    <property type="pathway name" value="Formation of a pool of free 40S subunits"/>
</dbReference>
<dbReference type="Reactome" id="R-CEL-72695">
    <property type="pathway name" value="Formation of the ternary complex, and subsequently, the 43S complex"/>
</dbReference>
<dbReference type="Reactome" id="R-CEL-72702">
    <property type="pathway name" value="Ribosomal scanning and start codon recognition"/>
</dbReference>
<dbReference type="PRO" id="PR:Q965S8"/>
<dbReference type="Proteomes" id="UP000001940">
    <property type="component" value="Chromosome I"/>
</dbReference>
<dbReference type="Bgee" id="WBGene00001232">
    <property type="expression patterns" value="Expressed in adult organism and 4 other cell types or tissues"/>
</dbReference>
<dbReference type="ExpressionAtlas" id="Q965S8">
    <property type="expression patterns" value="baseline and differential"/>
</dbReference>
<dbReference type="GO" id="GO:0016282">
    <property type="term" value="C:eukaryotic 43S preinitiation complex"/>
    <property type="evidence" value="ECO:0007669"/>
    <property type="project" value="UniProtKB-UniRule"/>
</dbReference>
<dbReference type="GO" id="GO:0033290">
    <property type="term" value="C:eukaryotic 48S preinitiation complex"/>
    <property type="evidence" value="ECO:0007669"/>
    <property type="project" value="UniProtKB-UniRule"/>
</dbReference>
<dbReference type="GO" id="GO:0071541">
    <property type="term" value="C:eukaryotic translation initiation factor 3 complex, eIF3m"/>
    <property type="evidence" value="ECO:0000318"/>
    <property type="project" value="GO_Central"/>
</dbReference>
<dbReference type="GO" id="GO:0003723">
    <property type="term" value="F:RNA binding"/>
    <property type="evidence" value="ECO:0000318"/>
    <property type="project" value="GO_Central"/>
</dbReference>
<dbReference type="GO" id="GO:0003743">
    <property type="term" value="F:translation initiation factor activity"/>
    <property type="evidence" value="ECO:0000318"/>
    <property type="project" value="GO_Central"/>
</dbReference>
<dbReference type="GO" id="GO:0002183">
    <property type="term" value="P:cytoplasmic translational initiation"/>
    <property type="evidence" value="ECO:0000318"/>
    <property type="project" value="GO_Central"/>
</dbReference>
<dbReference type="GO" id="GO:0001732">
    <property type="term" value="P:formation of cytoplasmic translation initiation complex"/>
    <property type="evidence" value="ECO:0007669"/>
    <property type="project" value="UniProtKB-UniRule"/>
</dbReference>
<dbReference type="Gene3D" id="2.130.10.10">
    <property type="entry name" value="YVTN repeat-like/Quinoprotein amine dehydrogenase"/>
    <property type="match status" value="1"/>
</dbReference>
<dbReference type="HAMAP" id="MF_03008">
    <property type="entry name" value="eIF3i"/>
    <property type="match status" value="1"/>
</dbReference>
<dbReference type="InterPro" id="IPR027525">
    <property type="entry name" value="eIF3i"/>
</dbReference>
<dbReference type="InterPro" id="IPR015943">
    <property type="entry name" value="WD40/YVTN_repeat-like_dom_sf"/>
</dbReference>
<dbReference type="InterPro" id="IPR036322">
    <property type="entry name" value="WD40_repeat_dom_sf"/>
</dbReference>
<dbReference type="InterPro" id="IPR001680">
    <property type="entry name" value="WD40_rpt"/>
</dbReference>
<dbReference type="PANTHER" id="PTHR19877">
    <property type="entry name" value="EUKARYOTIC TRANSLATION INITIATION FACTOR 3 SUBUNIT I"/>
    <property type="match status" value="1"/>
</dbReference>
<dbReference type="PANTHER" id="PTHR19877:SF1">
    <property type="entry name" value="EUKARYOTIC TRANSLATION INITIATION FACTOR 3 SUBUNIT I"/>
    <property type="match status" value="1"/>
</dbReference>
<dbReference type="Pfam" id="PF24805">
    <property type="entry name" value="EIF3I"/>
    <property type="match status" value="1"/>
</dbReference>
<dbReference type="SMART" id="SM00320">
    <property type="entry name" value="WD40"/>
    <property type="match status" value="5"/>
</dbReference>
<dbReference type="SUPFAM" id="SSF50978">
    <property type="entry name" value="WD40 repeat-like"/>
    <property type="match status" value="1"/>
</dbReference>
<dbReference type="PROSITE" id="PS00678">
    <property type="entry name" value="WD_REPEATS_1"/>
    <property type="match status" value="1"/>
</dbReference>
<dbReference type="PROSITE" id="PS50082">
    <property type="entry name" value="WD_REPEATS_2"/>
    <property type="match status" value="4"/>
</dbReference>
<dbReference type="PROSITE" id="PS50294">
    <property type="entry name" value="WD_REPEATS_REGION"/>
    <property type="match status" value="3"/>
</dbReference>
<accession>Q965S8</accession>
<sequence>MRPLSLKGHERALTRVRFNREGDLTFSCAKDKKPCVWYTENGERIGSYDGHNGAVWDIDVSWDTTKCVTASGDLTVKIWDAELGNCLYTINHQTPMKSCGFSYSGNLVCFTTQKMTKNLSTFQVRDLRDSSQMVEGGESFFYSQFDVNATTALFTQMDDLVTIGFESGLLQQYDLRNPDTPIHTNESVHRYSVQDLQLSPRGDFLISASRDKTAALLDVNDLKKLKQYKSERPVNSACISPNRDHICLGGGEDAMQVTQTSVSAGHFEAKIYHMVFEEEFARFKGHFGPINTMAWHPSGTIIATGGEDGYIRIQEFDEDYLGFTYDF</sequence>
<comment type="function">
    <text evidence="1">Component of the eukaryotic translation initiation factor 3 (eIF-3) complex, which is involved in protein synthesis of a specialized repertoire of mRNAs and, together with other initiation factors, stimulates binding of mRNA and methionyl-tRNAi to the 40S ribosome. The eIF-3 complex specifically targets and initiates translation of a subset of mRNAs involved in cell proliferation.</text>
</comment>
<comment type="subunit">
    <text evidence="1">Component of the eukaryotic translation initiation factor 3 (eIF-3) complex.</text>
</comment>
<comment type="subcellular location">
    <subcellularLocation>
        <location evidence="1">Cytoplasm</location>
    </subcellularLocation>
</comment>
<comment type="similarity">
    <text evidence="1">Belongs to the eIF-3 subunit I family.</text>
</comment>
<gene>
    <name evidence="1" type="primary">eif-3.I</name>
    <name evidence="3" type="ORF">Y74C10AR.1</name>
</gene>
<evidence type="ECO:0000255" key="1">
    <source>
        <dbReference type="HAMAP-Rule" id="MF_03008"/>
    </source>
</evidence>
<evidence type="ECO:0000269" key="2">
    <source>
    </source>
</evidence>
<evidence type="ECO:0000312" key="3">
    <source>
        <dbReference type="WormBase" id="Y74C10AR.1a"/>
    </source>
</evidence>
<proteinExistence type="evidence at protein level"/>
<protein>
    <recommendedName>
        <fullName evidence="1">Eukaryotic translation initiation factor 3 subunit I</fullName>
        <shortName evidence="1">eIF3i</shortName>
    </recommendedName>
</protein>
<organism>
    <name type="scientific">Caenorhabditis elegans</name>
    <dbReference type="NCBI Taxonomy" id="6239"/>
    <lineage>
        <taxon>Eukaryota</taxon>
        <taxon>Metazoa</taxon>
        <taxon>Ecdysozoa</taxon>
        <taxon>Nematoda</taxon>
        <taxon>Chromadorea</taxon>
        <taxon>Rhabditida</taxon>
        <taxon>Rhabditina</taxon>
        <taxon>Rhabditomorpha</taxon>
        <taxon>Rhabditoidea</taxon>
        <taxon>Rhabditidae</taxon>
        <taxon>Peloderinae</taxon>
        <taxon>Caenorhabditis</taxon>
    </lineage>
</organism>